<gene>
    <name type="primary">MBF1</name>
    <name type="ordered locus">CNBJ2740</name>
</gene>
<sequence length="150" mass="15938">MSDWDKPTVIGFRQQKPTVAKGSTLNAAQRAGLVISSESKGAGQSKGPADHQRIAKLDRDDAPKPPEKVSADVGKAVATARMAIKNAEGKSMTQKELATSVNAKPQDIADLESGRAVPDQALLGKLERKLNVKLRGAKNLIGTPLHPKKK</sequence>
<proteinExistence type="inferred from homology"/>
<feature type="chain" id="PRO_0000410120" description="Multiprotein-bridging factor 1">
    <location>
        <begin position="1"/>
        <end position="150"/>
    </location>
</feature>
<feature type="domain" description="HTH cro/C1-type" evidence="2">
    <location>
        <begin position="84"/>
        <end position="137"/>
    </location>
</feature>
<feature type="DNA-binding region" description="H-T-H motif" evidence="2">
    <location>
        <begin position="94"/>
        <end position="113"/>
    </location>
</feature>
<feature type="region of interest" description="Disordered" evidence="3">
    <location>
        <begin position="36"/>
        <end position="71"/>
    </location>
</feature>
<feature type="compositionally biased region" description="Basic and acidic residues" evidence="3">
    <location>
        <begin position="48"/>
        <end position="70"/>
    </location>
</feature>
<dbReference type="EMBL" id="AAEY01000050">
    <property type="protein sequence ID" value="EAL18351.1"/>
    <property type="molecule type" value="Genomic_DNA"/>
</dbReference>
<dbReference type="RefSeq" id="XP_772998.1">
    <property type="nucleotide sequence ID" value="XM_767905.1"/>
</dbReference>
<dbReference type="SMR" id="P0CO31"/>
<dbReference type="EnsemblFungi" id="AAW45939">
    <property type="protein sequence ID" value="AAW45939"/>
    <property type="gene ID" value="CNJ00750"/>
</dbReference>
<dbReference type="GeneID" id="4938617"/>
<dbReference type="KEGG" id="cnb:CNBJ2740"/>
<dbReference type="VEuPathDB" id="FungiDB:CNBJ2740"/>
<dbReference type="HOGENOM" id="CLU_112609_0_1_1"/>
<dbReference type="OrthoDB" id="2333at5206"/>
<dbReference type="GO" id="GO:0005634">
    <property type="term" value="C:nucleus"/>
    <property type="evidence" value="ECO:0007669"/>
    <property type="project" value="TreeGrafter"/>
</dbReference>
<dbReference type="GO" id="GO:0003677">
    <property type="term" value="F:DNA binding"/>
    <property type="evidence" value="ECO:0007669"/>
    <property type="project" value="UniProtKB-KW"/>
</dbReference>
<dbReference type="CDD" id="cd00093">
    <property type="entry name" value="HTH_XRE"/>
    <property type="match status" value="1"/>
</dbReference>
<dbReference type="FunFam" id="1.10.260.40:FF:000058">
    <property type="entry name" value="Multiprotein-bridging factor 1"/>
    <property type="match status" value="1"/>
</dbReference>
<dbReference type="Gene3D" id="1.10.260.40">
    <property type="entry name" value="lambda repressor-like DNA-binding domains"/>
    <property type="match status" value="1"/>
</dbReference>
<dbReference type="InterPro" id="IPR001387">
    <property type="entry name" value="Cro/C1-type_HTH"/>
</dbReference>
<dbReference type="InterPro" id="IPR010982">
    <property type="entry name" value="Lambda_DNA-bd_dom_sf"/>
</dbReference>
<dbReference type="InterPro" id="IPR013729">
    <property type="entry name" value="MBF1_N"/>
</dbReference>
<dbReference type="PANTHER" id="PTHR10245:SF15">
    <property type="entry name" value="ENDOTHELIAL DIFFERENTIATION-RELATED FACTOR 1"/>
    <property type="match status" value="1"/>
</dbReference>
<dbReference type="PANTHER" id="PTHR10245">
    <property type="entry name" value="ENDOTHELIAL DIFFERENTIATION-RELATED FACTOR 1 MULTIPROTEIN BRIDGING FACTOR 1"/>
    <property type="match status" value="1"/>
</dbReference>
<dbReference type="Pfam" id="PF01381">
    <property type="entry name" value="HTH_3"/>
    <property type="match status" value="1"/>
</dbReference>
<dbReference type="Pfam" id="PF08523">
    <property type="entry name" value="MBF1"/>
    <property type="match status" value="1"/>
</dbReference>
<dbReference type="SMART" id="SM00530">
    <property type="entry name" value="HTH_XRE"/>
    <property type="match status" value="1"/>
</dbReference>
<dbReference type="SUPFAM" id="SSF47413">
    <property type="entry name" value="lambda repressor-like DNA-binding domains"/>
    <property type="match status" value="1"/>
</dbReference>
<dbReference type="PROSITE" id="PS50943">
    <property type="entry name" value="HTH_CROC1"/>
    <property type="match status" value="1"/>
</dbReference>
<protein>
    <recommendedName>
        <fullName>Multiprotein-bridging factor 1</fullName>
    </recommendedName>
</protein>
<organism>
    <name type="scientific">Cryptococcus neoformans var. neoformans serotype D (strain B-3501A)</name>
    <name type="common">Filobasidiella neoformans</name>
    <dbReference type="NCBI Taxonomy" id="283643"/>
    <lineage>
        <taxon>Eukaryota</taxon>
        <taxon>Fungi</taxon>
        <taxon>Dikarya</taxon>
        <taxon>Basidiomycota</taxon>
        <taxon>Agaricomycotina</taxon>
        <taxon>Tremellomycetes</taxon>
        <taxon>Tremellales</taxon>
        <taxon>Cryptococcaceae</taxon>
        <taxon>Cryptococcus</taxon>
        <taxon>Cryptococcus neoformans species complex</taxon>
    </lineage>
</organism>
<name>MBF1_CRYNB</name>
<reference key="1">
    <citation type="journal article" date="2005" name="Science">
        <title>The genome of the basidiomycetous yeast and human pathogen Cryptococcus neoformans.</title>
        <authorList>
            <person name="Loftus B.J."/>
            <person name="Fung E."/>
            <person name="Roncaglia P."/>
            <person name="Rowley D."/>
            <person name="Amedeo P."/>
            <person name="Bruno D."/>
            <person name="Vamathevan J."/>
            <person name="Miranda M."/>
            <person name="Anderson I.J."/>
            <person name="Fraser J.A."/>
            <person name="Allen J.E."/>
            <person name="Bosdet I.E."/>
            <person name="Brent M.R."/>
            <person name="Chiu R."/>
            <person name="Doering T.L."/>
            <person name="Donlin M.J."/>
            <person name="D'Souza C.A."/>
            <person name="Fox D.S."/>
            <person name="Grinberg V."/>
            <person name="Fu J."/>
            <person name="Fukushima M."/>
            <person name="Haas B.J."/>
            <person name="Huang J.C."/>
            <person name="Janbon G."/>
            <person name="Jones S.J.M."/>
            <person name="Koo H.L."/>
            <person name="Krzywinski M.I."/>
            <person name="Kwon-Chung K.J."/>
            <person name="Lengeler K.B."/>
            <person name="Maiti R."/>
            <person name="Marra M.A."/>
            <person name="Marra R.E."/>
            <person name="Mathewson C.A."/>
            <person name="Mitchell T.G."/>
            <person name="Pertea M."/>
            <person name="Riggs F.R."/>
            <person name="Salzberg S.L."/>
            <person name="Schein J.E."/>
            <person name="Shvartsbeyn A."/>
            <person name="Shin H."/>
            <person name="Shumway M."/>
            <person name="Specht C.A."/>
            <person name="Suh B.B."/>
            <person name="Tenney A."/>
            <person name="Utterback T.R."/>
            <person name="Wickes B.L."/>
            <person name="Wortman J.R."/>
            <person name="Wye N.H."/>
            <person name="Kronstad J.W."/>
            <person name="Lodge J.K."/>
            <person name="Heitman J."/>
            <person name="Davis R.W."/>
            <person name="Fraser C.M."/>
            <person name="Hyman R.W."/>
        </authorList>
    </citation>
    <scope>NUCLEOTIDE SEQUENCE [LARGE SCALE GENOMIC DNA]</scope>
    <source>
        <strain>B-3501A</strain>
    </source>
</reference>
<accession>P0CO31</accession>
<accession>Q55KQ9</accession>
<accession>Q5KAR7</accession>
<evidence type="ECO:0000250" key="1">
    <source>
        <dbReference type="UniProtKB" id="O14467"/>
    </source>
</evidence>
<evidence type="ECO:0000255" key="2">
    <source>
        <dbReference type="PROSITE-ProRule" id="PRU00257"/>
    </source>
</evidence>
<evidence type="ECO:0000256" key="3">
    <source>
        <dbReference type="SAM" id="MobiDB-lite"/>
    </source>
</evidence>
<evidence type="ECO:0000305" key="4"/>
<comment type="function">
    <text evidence="1">Transcriptional coactivator that stimulates GCN4-dependent transcriptional activity by bridging the DNA-binding region of GCN4 and TBP (SPT15), thereby recruiting TBP to GCN4-bound promoters. Involved in induction of the ribosome quality control (RQC) pathway; a pathway that degrades nascent peptide chains during problematic translation. Required to prevent stalled ribosomes from frameshifting.</text>
</comment>
<comment type="similarity">
    <text evidence="4">Belongs to the MBF1 family.</text>
</comment>
<keyword id="KW-0010">Activator</keyword>
<keyword id="KW-0238">DNA-binding</keyword>
<keyword id="KW-0804">Transcription</keyword>
<keyword id="KW-0805">Transcription regulation</keyword>